<sequence>MNQTLLSDFGTPVERVERAIDALRNGRGVMVLDDESRENEGDMVFAAEAMTLEQMALTIRHGSGIVCLCITDERRQQLDLPMMVTHNSSQFQTAFTVTIEAAEGVTTGVSAADRLTTIRKAIADNAKPADLNRPGHVFPLRGQPGGVLSRRGHTEASIDLATLAGYKPAGVLCELTNDDGSMAHAPEVIAFAKLHDMPVVTIDDLAAYLQSRAKKAS</sequence>
<proteinExistence type="inferred from homology"/>
<reference key="1">
    <citation type="journal article" date="2010" name="J. Bacteriol.">
        <title>Genome sequence of the deep-rooted Yersinia pestis strain Angola reveals new insights into the evolution and pangenome of the plague bacterium.</title>
        <authorList>
            <person name="Eppinger M."/>
            <person name="Worsham P.L."/>
            <person name="Nikolich M.P."/>
            <person name="Riley D.R."/>
            <person name="Sebastian Y."/>
            <person name="Mou S."/>
            <person name="Achtman M."/>
            <person name="Lindler L.E."/>
            <person name="Ravel J."/>
        </authorList>
    </citation>
    <scope>NUCLEOTIDE SEQUENCE [LARGE SCALE GENOMIC DNA]</scope>
    <source>
        <strain>Angola</strain>
    </source>
</reference>
<keyword id="KW-0456">Lyase</keyword>
<keyword id="KW-0460">Magnesium</keyword>
<keyword id="KW-0464">Manganese</keyword>
<keyword id="KW-0479">Metal-binding</keyword>
<keyword id="KW-0686">Riboflavin biosynthesis</keyword>
<accession>A9R7D2</accession>
<comment type="function">
    <text evidence="1">Catalyzes the conversion of D-ribulose 5-phosphate to formate and 3,4-dihydroxy-2-butanone 4-phosphate.</text>
</comment>
<comment type="catalytic activity">
    <reaction evidence="1">
        <text>D-ribulose 5-phosphate = (2S)-2-hydroxy-3-oxobutyl phosphate + formate + H(+)</text>
        <dbReference type="Rhea" id="RHEA:18457"/>
        <dbReference type="ChEBI" id="CHEBI:15378"/>
        <dbReference type="ChEBI" id="CHEBI:15740"/>
        <dbReference type="ChEBI" id="CHEBI:58121"/>
        <dbReference type="ChEBI" id="CHEBI:58830"/>
        <dbReference type="EC" id="4.1.99.12"/>
    </reaction>
</comment>
<comment type="cofactor">
    <cofactor evidence="1">
        <name>Mg(2+)</name>
        <dbReference type="ChEBI" id="CHEBI:18420"/>
    </cofactor>
    <cofactor evidence="1">
        <name>Mn(2+)</name>
        <dbReference type="ChEBI" id="CHEBI:29035"/>
    </cofactor>
    <text evidence="1">Binds 2 divalent metal cations per subunit. Magnesium or manganese.</text>
</comment>
<comment type="pathway">
    <text evidence="1">Cofactor biosynthesis; riboflavin biosynthesis; 2-hydroxy-3-oxobutyl phosphate from D-ribulose 5-phosphate: step 1/1.</text>
</comment>
<comment type="subunit">
    <text evidence="1">Homodimer.</text>
</comment>
<comment type="similarity">
    <text evidence="1">Belongs to the DHBP synthase family.</text>
</comment>
<protein>
    <recommendedName>
        <fullName evidence="1">3,4-dihydroxy-2-butanone 4-phosphate synthase</fullName>
        <shortName evidence="1">DHBP synthase</shortName>
        <ecNumber evidence="1">4.1.99.12</ecNumber>
    </recommendedName>
</protein>
<dbReference type="EC" id="4.1.99.12" evidence="1"/>
<dbReference type="EMBL" id="CP000901">
    <property type="protein sequence ID" value="ABX86449.1"/>
    <property type="molecule type" value="Genomic_DNA"/>
</dbReference>
<dbReference type="RefSeq" id="WP_002212190.1">
    <property type="nucleotide sequence ID" value="NZ_CP009935.1"/>
</dbReference>
<dbReference type="SMR" id="A9R7D2"/>
<dbReference type="GeneID" id="57973967"/>
<dbReference type="KEGG" id="ypg:YpAngola_A0289"/>
<dbReference type="PATRIC" id="fig|349746.12.peg.1237"/>
<dbReference type="UniPathway" id="UPA00275">
    <property type="reaction ID" value="UER00399"/>
</dbReference>
<dbReference type="GO" id="GO:0005829">
    <property type="term" value="C:cytosol"/>
    <property type="evidence" value="ECO:0007669"/>
    <property type="project" value="TreeGrafter"/>
</dbReference>
<dbReference type="GO" id="GO:0008686">
    <property type="term" value="F:3,4-dihydroxy-2-butanone-4-phosphate synthase activity"/>
    <property type="evidence" value="ECO:0007669"/>
    <property type="project" value="UniProtKB-UniRule"/>
</dbReference>
<dbReference type="GO" id="GO:0000287">
    <property type="term" value="F:magnesium ion binding"/>
    <property type="evidence" value="ECO:0007669"/>
    <property type="project" value="UniProtKB-UniRule"/>
</dbReference>
<dbReference type="GO" id="GO:0030145">
    <property type="term" value="F:manganese ion binding"/>
    <property type="evidence" value="ECO:0007669"/>
    <property type="project" value="UniProtKB-UniRule"/>
</dbReference>
<dbReference type="GO" id="GO:0009231">
    <property type="term" value="P:riboflavin biosynthetic process"/>
    <property type="evidence" value="ECO:0007669"/>
    <property type="project" value="UniProtKB-UniRule"/>
</dbReference>
<dbReference type="FunFam" id="3.90.870.10:FF:000002">
    <property type="entry name" value="3,4-dihydroxy-2-butanone 4-phosphate synthase"/>
    <property type="match status" value="1"/>
</dbReference>
<dbReference type="Gene3D" id="3.90.870.10">
    <property type="entry name" value="DHBP synthase"/>
    <property type="match status" value="1"/>
</dbReference>
<dbReference type="HAMAP" id="MF_00180">
    <property type="entry name" value="RibB"/>
    <property type="match status" value="1"/>
</dbReference>
<dbReference type="InterPro" id="IPR017945">
    <property type="entry name" value="DHBP_synth_RibB-like_a/b_dom"/>
</dbReference>
<dbReference type="InterPro" id="IPR000422">
    <property type="entry name" value="DHBP_synthase_RibB"/>
</dbReference>
<dbReference type="NCBIfam" id="TIGR00506">
    <property type="entry name" value="ribB"/>
    <property type="match status" value="1"/>
</dbReference>
<dbReference type="PANTHER" id="PTHR21327:SF38">
    <property type="entry name" value="3,4-DIHYDROXY-2-BUTANONE 4-PHOSPHATE SYNTHASE"/>
    <property type="match status" value="1"/>
</dbReference>
<dbReference type="PANTHER" id="PTHR21327">
    <property type="entry name" value="GTP CYCLOHYDROLASE II-RELATED"/>
    <property type="match status" value="1"/>
</dbReference>
<dbReference type="Pfam" id="PF00926">
    <property type="entry name" value="DHBP_synthase"/>
    <property type="match status" value="1"/>
</dbReference>
<dbReference type="SUPFAM" id="SSF55821">
    <property type="entry name" value="YrdC/RibB"/>
    <property type="match status" value="1"/>
</dbReference>
<evidence type="ECO:0000255" key="1">
    <source>
        <dbReference type="HAMAP-Rule" id="MF_00180"/>
    </source>
</evidence>
<gene>
    <name evidence="1" type="primary">ribB</name>
    <name type="ordered locus">YpAngola_A0289</name>
</gene>
<feature type="chain" id="PRO_1000098294" description="3,4-dihydroxy-2-butanone 4-phosphate synthase">
    <location>
        <begin position="1"/>
        <end position="217"/>
    </location>
</feature>
<feature type="binding site" evidence="1">
    <location>
        <begin position="37"/>
        <end position="38"/>
    </location>
    <ligand>
        <name>D-ribulose 5-phosphate</name>
        <dbReference type="ChEBI" id="CHEBI:58121"/>
    </ligand>
</feature>
<feature type="binding site" evidence="1">
    <location>
        <position position="38"/>
    </location>
    <ligand>
        <name>Mg(2+)</name>
        <dbReference type="ChEBI" id="CHEBI:18420"/>
        <label>1</label>
    </ligand>
</feature>
<feature type="binding site" evidence="1">
    <location>
        <position position="38"/>
    </location>
    <ligand>
        <name>Mg(2+)</name>
        <dbReference type="ChEBI" id="CHEBI:18420"/>
        <label>2</label>
    </ligand>
</feature>
<feature type="binding site" evidence="1">
    <location>
        <position position="42"/>
    </location>
    <ligand>
        <name>D-ribulose 5-phosphate</name>
        <dbReference type="ChEBI" id="CHEBI:58121"/>
    </ligand>
</feature>
<feature type="binding site" evidence="1">
    <location>
        <begin position="150"/>
        <end position="154"/>
    </location>
    <ligand>
        <name>D-ribulose 5-phosphate</name>
        <dbReference type="ChEBI" id="CHEBI:58121"/>
    </ligand>
</feature>
<feature type="binding site" evidence="1">
    <location>
        <position position="153"/>
    </location>
    <ligand>
        <name>Mg(2+)</name>
        <dbReference type="ChEBI" id="CHEBI:18420"/>
        <label>2</label>
    </ligand>
</feature>
<feature type="binding site" evidence="1">
    <location>
        <position position="174"/>
    </location>
    <ligand>
        <name>D-ribulose 5-phosphate</name>
        <dbReference type="ChEBI" id="CHEBI:58121"/>
    </ligand>
</feature>
<feature type="site" description="Essential for catalytic activity" evidence="1">
    <location>
        <position position="136"/>
    </location>
</feature>
<feature type="site" description="Essential for catalytic activity" evidence="1">
    <location>
        <position position="174"/>
    </location>
</feature>
<organism>
    <name type="scientific">Yersinia pestis bv. Antiqua (strain Angola)</name>
    <dbReference type="NCBI Taxonomy" id="349746"/>
    <lineage>
        <taxon>Bacteria</taxon>
        <taxon>Pseudomonadati</taxon>
        <taxon>Pseudomonadota</taxon>
        <taxon>Gammaproteobacteria</taxon>
        <taxon>Enterobacterales</taxon>
        <taxon>Yersiniaceae</taxon>
        <taxon>Yersinia</taxon>
    </lineage>
</organism>
<name>RIBB_YERPG</name>